<feature type="chain" id="PRO_0000409271" description="Chromosome partition protein Smc">
    <location>
        <begin position="1"/>
        <end position="1198"/>
    </location>
</feature>
<feature type="domain" description="SMC hinge">
    <location>
        <begin position="534"/>
        <end position="647"/>
    </location>
</feature>
<feature type="region of interest" description="Disordered" evidence="2">
    <location>
        <begin position="785"/>
        <end position="818"/>
    </location>
</feature>
<feature type="coiled-coil region" evidence="1">
    <location>
        <begin position="175"/>
        <end position="211"/>
    </location>
</feature>
<feature type="coiled-coil region" evidence="1">
    <location>
        <begin position="322"/>
        <end position="524"/>
    </location>
</feature>
<feature type="coiled-coil region" evidence="1">
    <location>
        <begin position="687"/>
        <end position="1042"/>
    </location>
</feature>
<feature type="compositionally biased region" description="Basic and acidic residues" evidence="2">
    <location>
        <begin position="803"/>
        <end position="818"/>
    </location>
</feature>
<feature type="binding site" evidence="1">
    <location>
        <begin position="40"/>
        <end position="47"/>
    </location>
    <ligand>
        <name>ATP</name>
        <dbReference type="ChEBI" id="CHEBI:30616"/>
    </ligand>
</feature>
<organism>
    <name type="scientific">Desulfitobacterium hafniense (strain Y51)</name>
    <dbReference type="NCBI Taxonomy" id="138119"/>
    <lineage>
        <taxon>Bacteria</taxon>
        <taxon>Bacillati</taxon>
        <taxon>Bacillota</taxon>
        <taxon>Clostridia</taxon>
        <taxon>Eubacteriales</taxon>
        <taxon>Desulfitobacteriaceae</taxon>
        <taxon>Desulfitobacterium</taxon>
    </lineage>
</organism>
<proteinExistence type="inferred from homology"/>
<reference key="1">
    <citation type="journal article" date="2006" name="J. Bacteriol.">
        <title>Complete genome sequence of the dehalorespiring bacterium Desulfitobacterium hafniense Y51 and comparison with Dehalococcoides ethenogenes 195.</title>
        <authorList>
            <person name="Nonaka H."/>
            <person name="Keresztes G."/>
            <person name="Shinoda Y."/>
            <person name="Ikenaga Y."/>
            <person name="Abe M."/>
            <person name="Naito K."/>
            <person name="Inatomi K."/>
            <person name="Furukawa K."/>
            <person name="Inui M."/>
            <person name="Yukawa H."/>
        </authorList>
    </citation>
    <scope>NUCLEOTIDE SEQUENCE [LARGE SCALE GENOMIC DNA]</scope>
    <source>
        <strain>Y51</strain>
    </source>
</reference>
<sequence length="1198" mass="135528">MAKADTLPVFLKSITIQGFKSFADKVKLELGQGLSVVVGPNGSGKSNVADAIRWVLGEQSAKNLRGSKMEDVIFSGSSVRRPVGMAEVSLFFDNSTGIFPLEYQEVIITRRVYRDGEGQYFINRSSCRLKDIHELFMDTGAGKEGFSIIGQGRVEEILNLRSEERRTLIEEASGITKYRMRKREALKRLDETEHNLERIRDILAEIEGQLGPLEEQATIAREAVELTTEQKALEIEIVAFDLKEVRHKLTTSVQETEELQSAIAAAVADLSQKESEILGNKVKLNLLDEQIQKQQETTYQLDQAVNQIVQELRLRQEREGYLGEQINRVTTELSSHEEKVRQSTEQLRALEDRKALLHKTLEQANQALAADEQRLAEAKARNGLEEIEILRGSLSHLQSKLAESTAELNRFTHQLATLNSTHEQLVKEKKDKEAALFSHEQQEAQVQEQLKAQEELQTDIRLQTERAHQETAQLREQSKAGQRELQELNRDLEKKSARYHALKNLEDSLEGYQRGVRELMLAKKKNQPSCGDLCGTLADLLQVEERYEVAVEVALGAGIQNIVTETERGAKEAVHYLKSHNLGRATFLPLDVIQGGKATVAKEAAQDPGFIGVAVDLITFAEKYRKAFESQLGRTLIVTDMEAATRVARASGYRARIVTLEGDQVHPGGSLTGGSLQRKGSNLLGRSREIQELRQECDERRTQQKEMELKAGALGTQIQKGEENLKHLMGEEQELKSALAVLRTQELNLRAQAQRIHEEVTAIAARMAGIEQERDELQSHKALGAEEQSKLTDSIQEAQEALARQEEKNRQASREMEQLQERLTQTKVQAAKWEQELKQAVERLAQDQALLGENKHLLERKRKDLQDLEESKARLAFEQGDWESRRREAGEQQQQAQEVLIALRKEREVLSKELMDQESLAQKKRQEQQTLEQKLHNLELKTARWDAEWETGSRRLLEEFDLTWDEAQTYQSERNRAELGARVQEIKLRMELLGPVNQAAIEEYPKLQERYDFLSVQKQDLEEANESLQQLIAELDKTMSERFEEGFIAVNEAFKVVFKELFNGGYAELRLVDPTNLLDTGVEIIAQPPGKKPQLLSLLSGGERALTAIGLLFALLKVKPSPFCVLDEIEASLDDANVSRFAQYIHRLSDSTQFLVISHRKGTMEAADVLYGITMEESGVSKLLSVQLEGQDKDTRTA</sequence>
<dbReference type="EMBL" id="AP008230">
    <property type="protein sequence ID" value="BAE84444.1"/>
    <property type="molecule type" value="Genomic_DNA"/>
</dbReference>
<dbReference type="RefSeq" id="WP_011460497.1">
    <property type="nucleotide sequence ID" value="NC_007907.1"/>
</dbReference>
<dbReference type="SMR" id="Q24U48"/>
<dbReference type="STRING" id="138119.DSY2655"/>
<dbReference type="KEGG" id="dsy:DSY2655"/>
<dbReference type="eggNOG" id="COG1196">
    <property type="taxonomic scope" value="Bacteria"/>
</dbReference>
<dbReference type="HOGENOM" id="CLU_001042_2_2_9"/>
<dbReference type="Proteomes" id="UP000001946">
    <property type="component" value="Chromosome"/>
</dbReference>
<dbReference type="GO" id="GO:0005694">
    <property type="term" value="C:chromosome"/>
    <property type="evidence" value="ECO:0007669"/>
    <property type="project" value="InterPro"/>
</dbReference>
<dbReference type="GO" id="GO:0005737">
    <property type="term" value="C:cytoplasm"/>
    <property type="evidence" value="ECO:0007669"/>
    <property type="project" value="UniProtKB-SubCell"/>
</dbReference>
<dbReference type="GO" id="GO:0005524">
    <property type="term" value="F:ATP binding"/>
    <property type="evidence" value="ECO:0007669"/>
    <property type="project" value="UniProtKB-UniRule"/>
</dbReference>
<dbReference type="GO" id="GO:0016887">
    <property type="term" value="F:ATP hydrolysis activity"/>
    <property type="evidence" value="ECO:0007669"/>
    <property type="project" value="InterPro"/>
</dbReference>
<dbReference type="GO" id="GO:0003677">
    <property type="term" value="F:DNA binding"/>
    <property type="evidence" value="ECO:0007669"/>
    <property type="project" value="UniProtKB-UniRule"/>
</dbReference>
<dbReference type="GO" id="GO:0030261">
    <property type="term" value="P:chromosome condensation"/>
    <property type="evidence" value="ECO:0007669"/>
    <property type="project" value="InterPro"/>
</dbReference>
<dbReference type="GO" id="GO:0007059">
    <property type="term" value="P:chromosome segregation"/>
    <property type="evidence" value="ECO:0007669"/>
    <property type="project" value="UniProtKB-UniRule"/>
</dbReference>
<dbReference type="GO" id="GO:0006260">
    <property type="term" value="P:DNA replication"/>
    <property type="evidence" value="ECO:0007669"/>
    <property type="project" value="UniProtKB-UniRule"/>
</dbReference>
<dbReference type="GO" id="GO:0007062">
    <property type="term" value="P:sister chromatid cohesion"/>
    <property type="evidence" value="ECO:0007669"/>
    <property type="project" value="InterPro"/>
</dbReference>
<dbReference type="CDD" id="cd03278">
    <property type="entry name" value="ABC_SMC_barmotin"/>
    <property type="match status" value="2"/>
</dbReference>
<dbReference type="FunFam" id="3.40.50.300:FF:000901">
    <property type="entry name" value="Chromosome partition protein Smc"/>
    <property type="match status" value="1"/>
</dbReference>
<dbReference type="FunFam" id="3.40.50.300:FF:000984">
    <property type="entry name" value="Chromosome partition protein Smc"/>
    <property type="match status" value="1"/>
</dbReference>
<dbReference type="Gene3D" id="1.20.1060.20">
    <property type="match status" value="1"/>
</dbReference>
<dbReference type="Gene3D" id="3.30.70.1620">
    <property type="match status" value="1"/>
</dbReference>
<dbReference type="Gene3D" id="3.40.50.300">
    <property type="entry name" value="P-loop containing nucleotide triphosphate hydrolases"/>
    <property type="match status" value="2"/>
</dbReference>
<dbReference type="HAMAP" id="MF_01894">
    <property type="entry name" value="Smc_prok"/>
    <property type="match status" value="1"/>
</dbReference>
<dbReference type="InterPro" id="IPR027417">
    <property type="entry name" value="P-loop_NTPase"/>
</dbReference>
<dbReference type="InterPro" id="IPR003395">
    <property type="entry name" value="RecF/RecN/SMC_N"/>
</dbReference>
<dbReference type="InterPro" id="IPR024704">
    <property type="entry name" value="SMC"/>
</dbReference>
<dbReference type="InterPro" id="IPR010935">
    <property type="entry name" value="SMC_hinge"/>
</dbReference>
<dbReference type="InterPro" id="IPR036277">
    <property type="entry name" value="SMC_hinge_sf"/>
</dbReference>
<dbReference type="InterPro" id="IPR011890">
    <property type="entry name" value="SMC_prok"/>
</dbReference>
<dbReference type="NCBIfam" id="TIGR02168">
    <property type="entry name" value="SMC_prok_B"/>
    <property type="match status" value="1"/>
</dbReference>
<dbReference type="PANTHER" id="PTHR43977">
    <property type="entry name" value="STRUCTURAL MAINTENANCE OF CHROMOSOMES PROTEIN 3"/>
    <property type="match status" value="1"/>
</dbReference>
<dbReference type="Pfam" id="PF06470">
    <property type="entry name" value="SMC_hinge"/>
    <property type="match status" value="1"/>
</dbReference>
<dbReference type="Pfam" id="PF02463">
    <property type="entry name" value="SMC_N"/>
    <property type="match status" value="1"/>
</dbReference>
<dbReference type="PIRSF" id="PIRSF005719">
    <property type="entry name" value="SMC"/>
    <property type="match status" value="1"/>
</dbReference>
<dbReference type="SMART" id="SM00968">
    <property type="entry name" value="SMC_hinge"/>
    <property type="match status" value="1"/>
</dbReference>
<dbReference type="SUPFAM" id="SSF52540">
    <property type="entry name" value="P-loop containing nucleoside triphosphate hydrolases"/>
    <property type="match status" value="1"/>
</dbReference>
<dbReference type="SUPFAM" id="SSF75553">
    <property type="entry name" value="Smc hinge domain"/>
    <property type="match status" value="1"/>
</dbReference>
<evidence type="ECO:0000255" key="1">
    <source>
        <dbReference type="HAMAP-Rule" id="MF_01894"/>
    </source>
</evidence>
<evidence type="ECO:0000256" key="2">
    <source>
        <dbReference type="SAM" id="MobiDB-lite"/>
    </source>
</evidence>
<gene>
    <name evidence="1" type="primary">smc</name>
    <name type="ordered locus">DSY2655</name>
</gene>
<accession>Q24U48</accession>
<protein>
    <recommendedName>
        <fullName evidence="1">Chromosome partition protein Smc</fullName>
    </recommendedName>
</protein>
<name>SMC_DESHY</name>
<keyword id="KW-0067">ATP-binding</keyword>
<keyword id="KW-0175">Coiled coil</keyword>
<keyword id="KW-0963">Cytoplasm</keyword>
<keyword id="KW-0238">DNA-binding</keyword>
<keyword id="KW-0547">Nucleotide-binding</keyword>
<keyword id="KW-1185">Reference proteome</keyword>
<comment type="function">
    <text evidence="1">Required for chromosome condensation and partitioning.</text>
</comment>
<comment type="subunit">
    <text evidence="1">Homodimer.</text>
</comment>
<comment type="subcellular location">
    <subcellularLocation>
        <location evidence="1">Cytoplasm</location>
    </subcellularLocation>
</comment>
<comment type="domain">
    <text evidence="1">Contains large globular domains required for ATP hydrolysis at each terminus and a third globular domain forming a flexible SMC hinge near the middle of the molecule. These domains are separated by coiled-coil structures.</text>
</comment>
<comment type="similarity">
    <text evidence="1">Belongs to the SMC family.</text>
</comment>